<gene>
    <name type="primary">ndd</name>
</gene>
<reference key="1">
    <citation type="journal article" date="1988" name="J. Mol. Biol.">
        <title>Nucleotide and deduced amino acid sequence of stp: the bacteriophage T4 anticodon nuclease gene.</title>
        <authorList>
            <person name="Chapman D."/>
            <person name="Morad I."/>
            <person name="Kaufmann G."/>
            <person name="Gait M.J."/>
            <person name="Jorissen L."/>
            <person name="Snyder L."/>
        </authorList>
    </citation>
    <scope>PRELIMINARY NUCLEOTIDE SEQUENCE</scope>
</reference>
<reference key="2">
    <citation type="journal article" date="1994" name="Gene">
        <title>Direct PCR sequencing of the ndd gene of bacteriophage T4: identification of a product involved in bacterial nucleoid disruption.</title>
        <authorList>
            <person name="Bouet J.-Y."/>
            <person name="Woszczyk J."/>
            <person name="Repoila F."/>
            <person name="Francois V."/>
            <person name="Louarn J.-M."/>
            <person name="Krisch H.M."/>
        </authorList>
    </citation>
    <scope>NUCLEOTIDE SEQUENCE [GENOMIC DNA]</scope>
    <source>
        <strain>D</strain>
    </source>
</reference>
<reference key="3">
    <citation type="journal article" date="2003" name="Microbiol. Mol. Biol. Rev.">
        <title>Bacteriophage T4 genome.</title>
        <authorList>
            <person name="Miller E.S."/>
            <person name="Kutter E."/>
            <person name="Mosig G."/>
            <person name="Arisaka F."/>
            <person name="Kunisawa T."/>
            <person name="Ruger W."/>
        </authorList>
    </citation>
    <scope>NUCLEOTIDE SEQUENCE [LARGE SCALE GENOMIC DNA]</scope>
</reference>
<reference key="4">
    <citation type="journal article" date="1998" name="J. Bacteriol.">
        <title>Ndd, the bacteriophage T4 protein that disrupts the Escherichia coli nucleoid, has a DNA binding activity.</title>
        <authorList>
            <person name="Bouet J.Y."/>
            <person name="Krisch H.M."/>
            <person name="Louarn J.M."/>
        </authorList>
    </citation>
    <scope>FUNCTION</scope>
    <scope>DNA-BINDING</scope>
</reference>
<organismHost>
    <name type="scientific">Escherichia coli</name>
    <dbReference type="NCBI Taxonomy" id="562"/>
</organismHost>
<keyword id="KW-0238">DNA-binding</keyword>
<keyword id="KW-0945">Host-virus interaction</keyword>
<keyword id="KW-1248">Inhibition of host DNA replication by virus</keyword>
<keyword id="KW-1121">Modulation of host cell cycle by virus</keyword>
<keyword id="KW-1185">Reference proteome</keyword>
<organism>
    <name type="scientific">Enterobacteria phage T4</name>
    <name type="common">Bacteriophage T4</name>
    <dbReference type="NCBI Taxonomy" id="10665"/>
    <lineage>
        <taxon>Viruses</taxon>
        <taxon>Duplodnaviria</taxon>
        <taxon>Heunggongvirae</taxon>
        <taxon>Uroviricota</taxon>
        <taxon>Caudoviricetes</taxon>
        <taxon>Straboviridae</taxon>
        <taxon>Tevenvirinae</taxon>
        <taxon>Tequatrovirus</taxon>
    </lineage>
</organism>
<proteinExistence type="evidence at protein level"/>
<feature type="chain" id="PRO_0000164959" description="Nucleoid disruption protein">
    <location>
        <begin position="1"/>
        <end position="151"/>
    </location>
</feature>
<feature type="sequence variant" description="In mutant NDD44.">
    <original>G</original>
    <variation>D</variation>
    <location>
        <position position="63"/>
    </location>
</feature>
<name>NDD_BPT4</name>
<protein>
    <recommendedName>
        <fullName>Nucleoid disruption protein</fullName>
    </recommendedName>
</protein>
<sequence>MKYMTVTDLNDAGATVIGTIKGGEWFLGTPHKDILSKPGFYFLVSKLGGPFSNPCVSARFYVGNQRSKQGFSAVLSHIRQRRSQLARTIANNNVPYTVFYLPASKMKPLTTGFGKGQLALAFTRNHHSEYQTLEEMNRMLADNFKFVLQAY</sequence>
<dbReference type="EMBL" id="X75802">
    <property type="protein sequence ID" value="CAA53438.1"/>
    <property type="molecule type" value="Genomic_DNA"/>
</dbReference>
<dbReference type="EMBL" id="AF158101">
    <property type="protein sequence ID" value="AAD42615.1"/>
    <property type="molecule type" value="Genomic_DNA"/>
</dbReference>
<dbReference type="PIR" id="S01868">
    <property type="entry name" value="NDBPT4"/>
</dbReference>
<dbReference type="RefSeq" id="NP_049879.1">
    <property type="nucleotide sequence ID" value="NC_000866.4"/>
</dbReference>
<dbReference type="GeneID" id="1258737"/>
<dbReference type="KEGG" id="vg:1258737"/>
<dbReference type="OrthoDB" id="11172at10239"/>
<dbReference type="Proteomes" id="UP000009087">
    <property type="component" value="Segment"/>
</dbReference>
<dbReference type="GO" id="GO:0003677">
    <property type="term" value="F:DNA binding"/>
    <property type="evidence" value="ECO:0007669"/>
    <property type="project" value="UniProtKB-KW"/>
</dbReference>
<dbReference type="GO" id="GO:0044071">
    <property type="term" value="P:symbiont-mediated perturbation of host cell cycle progression"/>
    <property type="evidence" value="ECO:0007669"/>
    <property type="project" value="UniProtKB-KW"/>
</dbReference>
<dbReference type="GO" id="GO:0098673">
    <property type="term" value="P:symbiont-mediated suppression of host DNA replication"/>
    <property type="evidence" value="ECO:0007669"/>
    <property type="project" value="UniProtKB-KW"/>
</dbReference>
<dbReference type="InterPro" id="IPR009514">
    <property type="entry name" value="Phage_Ndd"/>
</dbReference>
<dbReference type="Pfam" id="PF06591">
    <property type="entry name" value="Phage_T4_Ndd"/>
    <property type="match status" value="1"/>
</dbReference>
<comment type="function">
    <text evidence="1">Disorganizes the host nucleoid and inhibits replication, but without host DNA cleavage or degradation. Only the architecture of the nucleoid is affected. May act on the host chromosomal sequences that determine the structure of the nucleoid. Binds to dsDNA but not to ssDNA.</text>
</comment>
<accession>P15556</accession>
<evidence type="ECO:0000269" key="1">
    <source>
    </source>
</evidence>